<evidence type="ECO:0000250" key="1"/>
<evidence type="ECO:0000255" key="2">
    <source>
        <dbReference type="HAMAP-Rule" id="MF_01416"/>
    </source>
</evidence>
<comment type="function">
    <text evidence="2">F(1)F(0) ATP synthase produces ATP from ADP in the presence of a proton or sodium gradient. F-type ATPases consist of two structural domains, F(1) containing the extramembraneous catalytic core and F(0) containing the membrane proton channel, linked together by a central stalk and a peripheral stalk. During catalysis, ATP synthesis in the catalytic domain of F(1) is coupled via a rotary mechanism of the central stalk subunits to proton translocation.</text>
</comment>
<comment type="function">
    <text evidence="2">This protein is part of the stalk that links CF(0) to CF(1). It either transmits conformational changes from CF(0) to CF(1) or is implicated in proton conduction.</text>
</comment>
<comment type="subunit">
    <text evidence="2">F-type ATPases have 2 components, F(1) - the catalytic core - and F(0) - the membrane proton channel. F(1) has five subunits: alpha(3), beta(3), gamma(1), delta(1), epsilon(1). F(0) has three main subunits: a(1), b(2) and c(10-14). The alpha and beta chains form an alternating ring which encloses part of the gamma chain. F(1) is attached to F(0) by a central stalk formed by the gamma and epsilon chains, while a peripheral stalk is formed by the delta and b chains.</text>
</comment>
<comment type="subcellular location">
    <subcellularLocation>
        <location evidence="1">Cellular chromatophore membrane</location>
        <topology evidence="2">Peripheral membrane protein</topology>
    </subcellularLocation>
</comment>
<comment type="similarity">
    <text evidence="2">Belongs to the ATPase delta chain family.</text>
</comment>
<organism>
    <name type="scientific">Rhodospirillum rubrum</name>
    <dbReference type="NCBI Taxonomy" id="1085"/>
    <lineage>
        <taxon>Bacteria</taxon>
        <taxon>Pseudomonadati</taxon>
        <taxon>Pseudomonadota</taxon>
        <taxon>Alphaproteobacteria</taxon>
        <taxon>Rhodospirillales</taxon>
        <taxon>Rhodospirillaceae</taxon>
        <taxon>Rhodospirillum</taxon>
    </lineage>
</organism>
<proteinExistence type="inferred from homology"/>
<gene>
    <name evidence="2" type="primary">atpH</name>
</gene>
<feature type="chain" id="PRO_0000193477" description="ATP synthase subunit delta">
    <location>
        <begin position="1"/>
        <end position="186"/>
    </location>
</feature>
<name>ATPD_RHORU</name>
<protein>
    <recommendedName>
        <fullName evidence="2">ATP synthase subunit delta</fullName>
    </recommendedName>
    <alternativeName>
        <fullName evidence="2">ATP synthase F(1) sector subunit delta</fullName>
    </alternativeName>
    <alternativeName>
        <fullName evidence="2">F-type ATPase subunit delta</fullName>
        <shortName evidence="2">F-ATPase subunit delta</shortName>
    </alternativeName>
</protein>
<accession>P05438</accession>
<sequence>MSSHKAGVTGVAERYATALYELAEDRGALDQVSADLRSLKAMLDESGDLRRVIASPVIGRDDQRKALTALAEKAGFHEIVRNFLGVVAAKHRSFAVPGMIGAFLERLAARRGEVTARIVSATALTSAQKSALTTALNKATGNTVTIDASVDPALLGGMVVRVGSRMVDSSLSTKLKRLQLAMKGVG</sequence>
<reference key="1">
    <citation type="journal article" date="1985" name="Biochem. J.">
        <title>Nucleotide sequence of the Rhodospirillum rubrum atp operon.</title>
        <authorList>
            <person name="Falk G."/>
            <person name="Hampe A."/>
            <person name="Walker J.E."/>
        </authorList>
    </citation>
    <scope>NUCLEOTIDE SEQUENCE [GENOMIC DNA]</scope>
</reference>
<keyword id="KW-0066">ATP synthesis</keyword>
<keyword id="KW-0139">CF(1)</keyword>
<keyword id="KW-0375">Hydrogen ion transport</keyword>
<keyword id="KW-0406">Ion transport</keyword>
<keyword id="KW-0472">Membrane</keyword>
<keyword id="KW-0813">Transport</keyword>
<dbReference type="EMBL" id="X02499">
    <property type="protein sequence ID" value="CAA26337.1"/>
    <property type="molecule type" value="Genomic_DNA"/>
</dbReference>
<dbReference type="PIR" id="S08580">
    <property type="entry name" value="PWQFD"/>
</dbReference>
<dbReference type="RefSeq" id="WP_011388978.1">
    <property type="nucleotide sequence ID" value="NZ_DAMDTZ010000168.1"/>
</dbReference>
<dbReference type="SMR" id="P05438"/>
<dbReference type="OMA" id="MVDNIQD"/>
<dbReference type="GO" id="GO:0005886">
    <property type="term" value="C:plasma membrane"/>
    <property type="evidence" value="ECO:0007669"/>
    <property type="project" value="UniProtKB-UniRule"/>
</dbReference>
<dbReference type="GO" id="GO:0042717">
    <property type="term" value="C:plasma membrane-derived chromatophore membrane"/>
    <property type="evidence" value="ECO:0007669"/>
    <property type="project" value="UniProtKB-SubCell"/>
</dbReference>
<dbReference type="GO" id="GO:0045259">
    <property type="term" value="C:proton-transporting ATP synthase complex"/>
    <property type="evidence" value="ECO:0007669"/>
    <property type="project" value="UniProtKB-KW"/>
</dbReference>
<dbReference type="GO" id="GO:0046933">
    <property type="term" value="F:proton-transporting ATP synthase activity, rotational mechanism"/>
    <property type="evidence" value="ECO:0007669"/>
    <property type="project" value="UniProtKB-UniRule"/>
</dbReference>
<dbReference type="Gene3D" id="1.10.520.20">
    <property type="entry name" value="N-terminal domain of the delta subunit of the F1F0-ATP synthase"/>
    <property type="match status" value="1"/>
</dbReference>
<dbReference type="HAMAP" id="MF_01416">
    <property type="entry name" value="ATP_synth_delta_bact"/>
    <property type="match status" value="1"/>
</dbReference>
<dbReference type="InterPro" id="IPR026015">
    <property type="entry name" value="ATP_synth_OSCP/delta_N_sf"/>
</dbReference>
<dbReference type="InterPro" id="IPR020781">
    <property type="entry name" value="ATPase_OSCP/d_CS"/>
</dbReference>
<dbReference type="InterPro" id="IPR000711">
    <property type="entry name" value="ATPase_OSCP/dsu"/>
</dbReference>
<dbReference type="NCBIfam" id="TIGR01145">
    <property type="entry name" value="ATP_synt_delta"/>
    <property type="match status" value="1"/>
</dbReference>
<dbReference type="NCBIfam" id="NF004406">
    <property type="entry name" value="PRK05758.3-2"/>
    <property type="match status" value="1"/>
</dbReference>
<dbReference type="PANTHER" id="PTHR11910">
    <property type="entry name" value="ATP SYNTHASE DELTA CHAIN"/>
    <property type="match status" value="1"/>
</dbReference>
<dbReference type="Pfam" id="PF00213">
    <property type="entry name" value="OSCP"/>
    <property type="match status" value="1"/>
</dbReference>
<dbReference type="PRINTS" id="PR00125">
    <property type="entry name" value="ATPASEDELTA"/>
</dbReference>
<dbReference type="SUPFAM" id="SSF47928">
    <property type="entry name" value="N-terminal domain of the delta subunit of the F1F0-ATP synthase"/>
    <property type="match status" value="1"/>
</dbReference>
<dbReference type="PROSITE" id="PS00389">
    <property type="entry name" value="ATPASE_DELTA"/>
    <property type="match status" value="1"/>
</dbReference>